<dbReference type="EC" id="3.6.4.13"/>
<dbReference type="EMBL" id="DS480400">
    <property type="protein sequence ID" value="EDO17640.1"/>
    <property type="molecule type" value="Genomic_DNA"/>
</dbReference>
<dbReference type="RefSeq" id="XP_001645498.1">
    <property type="nucleotide sequence ID" value="XM_001645448.1"/>
</dbReference>
<dbReference type="SMR" id="A7TJ71"/>
<dbReference type="FunCoup" id="A7TJ71">
    <property type="interactions" value="1125"/>
</dbReference>
<dbReference type="STRING" id="436907.A7TJ71"/>
<dbReference type="GeneID" id="5545878"/>
<dbReference type="KEGG" id="vpo:Kpol_1004p13"/>
<dbReference type="eggNOG" id="KOG0343">
    <property type="taxonomic scope" value="Eukaryota"/>
</dbReference>
<dbReference type="HOGENOM" id="CLU_003041_26_1_1"/>
<dbReference type="InParanoid" id="A7TJ71"/>
<dbReference type="OMA" id="YDKMFER"/>
<dbReference type="OrthoDB" id="10259640at2759"/>
<dbReference type="PhylomeDB" id="A7TJ71"/>
<dbReference type="Proteomes" id="UP000000267">
    <property type="component" value="Unassembled WGS sequence"/>
</dbReference>
<dbReference type="GO" id="GO:0005730">
    <property type="term" value="C:nucleolus"/>
    <property type="evidence" value="ECO:0007669"/>
    <property type="project" value="UniProtKB-SubCell"/>
</dbReference>
<dbReference type="GO" id="GO:0032040">
    <property type="term" value="C:small-subunit processome"/>
    <property type="evidence" value="ECO:0007669"/>
    <property type="project" value="EnsemblFungi"/>
</dbReference>
<dbReference type="GO" id="GO:0005524">
    <property type="term" value="F:ATP binding"/>
    <property type="evidence" value="ECO:0007669"/>
    <property type="project" value="UniProtKB-KW"/>
</dbReference>
<dbReference type="GO" id="GO:0016887">
    <property type="term" value="F:ATP hydrolysis activity"/>
    <property type="evidence" value="ECO:0007669"/>
    <property type="project" value="RHEA"/>
</dbReference>
<dbReference type="GO" id="GO:0042802">
    <property type="term" value="F:identical protein binding"/>
    <property type="evidence" value="ECO:0007669"/>
    <property type="project" value="EnsemblFungi"/>
</dbReference>
<dbReference type="GO" id="GO:0003723">
    <property type="term" value="F:RNA binding"/>
    <property type="evidence" value="ECO:0007669"/>
    <property type="project" value="UniProtKB-KW"/>
</dbReference>
<dbReference type="GO" id="GO:0003724">
    <property type="term" value="F:RNA helicase activity"/>
    <property type="evidence" value="ECO:0007669"/>
    <property type="project" value="UniProtKB-EC"/>
</dbReference>
<dbReference type="GO" id="GO:0006364">
    <property type="term" value="P:rRNA processing"/>
    <property type="evidence" value="ECO:0007669"/>
    <property type="project" value="UniProtKB-KW"/>
</dbReference>
<dbReference type="CDD" id="cd17941">
    <property type="entry name" value="DEADc_DDX10"/>
    <property type="match status" value="1"/>
</dbReference>
<dbReference type="CDD" id="cd18787">
    <property type="entry name" value="SF2_C_DEAD"/>
    <property type="match status" value="1"/>
</dbReference>
<dbReference type="FunFam" id="3.40.50.300:FF:001632">
    <property type="entry name" value="RNA helicase"/>
    <property type="match status" value="1"/>
</dbReference>
<dbReference type="Gene3D" id="3.40.50.300">
    <property type="entry name" value="P-loop containing nucleotide triphosphate hydrolases"/>
    <property type="match status" value="2"/>
</dbReference>
<dbReference type="InterPro" id="IPR011545">
    <property type="entry name" value="DEAD/DEAH_box_helicase_dom"/>
</dbReference>
<dbReference type="InterPro" id="IPR014001">
    <property type="entry name" value="Helicase_ATP-bd"/>
</dbReference>
<dbReference type="InterPro" id="IPR001650">
    <property type="entry name" value="Helicase_C-like"/>
</dbReference>
<dbReference type="InterPro" id="IPR027417">
    <property type="entry name" value="P-loop_NTPase"/>
</dbReference>
<dbReference type="InterPro" id="IPR000629">
    <property type="entry name" value="RNA-helicase_DEAD-box_CS"/>
</dbReference>
<dbReference type="InterPro" id="IPR014014">
    <property type="entry name" value="RNA_helicase_DEAD_Q_motif"/>
</dbReference>
<dbReference type="InterPro" id="IPR025313">
    <property type="entry name" value="SPB4-like_CTE"/>
</dbReference>
<dbReference type="PANTHER" id="PTHR24031">
    <property type="entry name" value="RNA HELICASE"/>
    <property type="match status" value="1"/>
</dbReference>
<dbReference type="Pfam" id="PF13959">
    <property type="entry name" value="CTE_SPB4"/>
    <property type="match status" value="1"/>
</dbReference>
<dbReference type="Pfam" id="PF00270">
    <property type="entry name" value="DEAD"/>
    <property type="match status" value="1"/>
</dbReference>
<dbReference type="Pfam" id="PF00271">
    <property type="entry name" value="Helicase_C"/>
    <property type="match status" value="1"/>
</dbReference>
<dbReference type="SMART" id="SM00487">
    <property type="entry name" value="DEXDc"/>
    <property type="match status" value="1"/>
</dbReference>
<dbReference type="SMART" id="SM01178">
    <property type="entry name" value="DUF4217"/>
    <property type="match status" value="1"/>
</dbReference>
<dbReference type="SMART" id="SM00490">
    <property type="entry name" value="HELICc"/>
    <property type="match status" value="1"/>
</dbReference>
<dbReference type="SUPFAM" id="SSF52540">
    <property type="entry name" value="P-loop containing nucleoside triphosphate hydrolases"/>
    <property type="match status" value="1"/>
</dbReference>
<dbReference type="PROSITE" id="PS00039">
    <property type="entry name" value="DEAD_ATP_HELICASE"/>
    <property type="match status" value="1"/>
</dbReference>
<dbReference type="PROSITE" id="PS51192">
    <property type="entry name" value="HELICASE_ATP_BIND_1"/>
    <property type="match status" value="1"/>
</dbReference>
<dbReference type="PROSITE" id="PS51194">
    <property type="entry name" value="HELICASE_CTER"/>
    <property type="match status" value="1"/>
</dbReference>
<dbReference type="PROSITE" id="PS51195">
    <property type="entry name" value="Q_MOTIF"/>
    <property type="match status" value="1"/>
</dbReference>
<keyword id="KW-0067">ATP-binding</keyword>
<keyword id="KW-0347">Helicase</keyword>
<keyword id="KW-0378">Hydrolase</keyword>
<keyword id="KW-0547">Nucleotide-binding</keyword>
<keyword id="KW-0539">Nucleus</keyword>
<keyword id="KW-1185">Reference proteome</keyword>
<keyword id="KW-0690">Ribosome biogenesis</keyword>
<keyword id="KW-0694">RNA-binding</keyword>
<keyword id="KW-0698">rRNA processing</keyword>
<protein>
    <recommendedName>
        <fullName>ATP-dependent RNA helicase DBP4</fullName>
        <ecNumber>3.6.4.13</ecNumber>
    </recommendedName>
</protein>
<gene>
    <name type="primary">DBP4</name>
    <name type="ORF">Kpol_1004p13</name>
</gene>
<organism>
    <name type="scientific">Vanderwaltozyma polyspora (strain ATCC 22028 / DSM 70294 / BCRC 21397 / CBS 2163 / NBRC 10782 / NRRL Y-8283 / UCD 57-17)</name>
    <name type="common">Kluyveromyces polysporus</name>
    <dbReference type="NCBI Taxonomy" id="436907"/>
    <lineage>
        <taxon>Eukaryota</taxon>
        <taxon>Fungi</taxon>
        <taxon>Dikarya</taxon>
        <taxon>Ascomycota</taxon>
        <taxon>Saccharomycotina</taxon>
        <taxon>Saccharomycetes</taxon>
        <taxon>Saccharomycetales</taxon>
        <taxon>Saccharomycetaceae</taxon>
        <taxon>Vanderwaltozyma</taxon>
    </lineage>
</organism>
<feature type="chain" id="PRO_0000310201" description="ATP-dependent RNA helicase DBP4">
    <location>
        <begin position="1"/>
        <end position="768"/>
    </location>
</feature>
<feature type="domain" description="Helicase ATP-binding" evidence="2">
    <location>
        <begin position="72"/>
        <end position="246"/>
    </location>
</feature>
<feature type="domain" description="Helicase C-terminal" evidence="3">
    <location>
        <begin position="280"/>
        <end position="439"/>
    </location>
</feature>
<feature type="region of interest" description="Disordered" evidence="4">
    <location>
        <begin position="581"/>
        <end position="612"/>
    </location>
</feature>
<feature type="region of interest" description="Disordered" evidence="4">
    <location>
        <begin position="653"/>
        <end position="754"/>
    </location>
</feature>
<feature type="short sequence motif" description="Q motif">
    <location>
        <begin position="41"/>
        <end position="69"/>
    </location>
</feature>
<feature type="short sequence motif" description="DEAD box">
    <location>
        <begin position="194"/>
        <end position="197"/>
    </location>
</feature>
<feature type="compositionally biased region" description="Basic and acidic residues" evidence="4">
    <location>
        <begin position="653"/>
        <end position="666"/>
    </location>
</feature>
<feature type="compositionally biased region" description="Basic residues" evidence="4">
    <location>
        <begin position="667"/>
        <end position="678"/>
    </location>
</feature>
<feature type="compositionally biased region" description="Acidic residues" evidence="4">
    <location>
        <begin position="711"/>
        <end position="721"/>
    </location>
</feature>
<feature type="binding site" evidence="2">
    <location>
        <begin position="85"/>
        <end position="92"/>
    </location>
    <ligand>
        <name>ATP</name>
        <dbReference type="ChEBI" id="CHEBI:30616"/>
    </ligand>
</feature>
<accession>A7TJ71</accession>
<comment type="function">
    <text evidence="1">ATP-dependent RNA helicase required for ribosome biogenesis. Involved in the release of U14 snoRNA in pre-ribosomal complexes. Required for pre-rRNA cleavage at site A2 (By similarity).</text>
</comment>
<comment type="catalytic activity">
    <reaction>
        <text>ATP + H2O = ADP + phosphate + H(+)</text>
        <dbReference type="Rhea" id="RHEA:13065"/>
        <dbReference type="ChEBI" id="CHEBI:15377"/>
        <dbReference type="ChEBI" id="CHEBI:15378"/>
        <dbReference type="ChEBI" id="CHEBI:30616"/>
        <dbReference type="ChEBI" id="CHEBI:43474"/>
        <dbReference type="ChEBI" id="CHEBI:456216"/>
        <dbReference type="EC" id="3.6.4.13"/>
    </reaction>
</comment>
<comment type="subunit">
    <text evidence="1">Interacts with the U3 and U14 snoRNAs. Associates with pre-ribosomal complexes (By similarity).</text>
</comment>
<comment type="subcellular location">
    <subcellularLocation>
        <location evidence="1">Nucleus</location>
        <location evidence="1">Nucleolus</location>
    </subcellularLocation>
</comment>
<comment type="domain">
    <text>The Q motif is unique to and characteristic of the DEAD box family of RNA helicases and controls ATP binding and hydrolysis.</text>
</comment>
<comment type="similarity">
    <text evidence="5">Belongs to the DEAD box helicase family. DDX10/DBP4 subfamily.</text>
</comment>
<evidence type="ECO:0000250" key="1"/>
<evidence type="ECO:0000255" key="2">
    <source>
        <dbReference type="PROSITE-ProRule" id="PRU00541"/>
    </source>
</evidence>
<evidence type="ECO:0000255" key="3">
    <source>
        <dbReference type="PROSITE-ProRule" id="PRU00542"/>
    </source>
</evidence>
<evidence type="ECO:0000256" key="4">
    <source>
        <dbReference type="SAM" id="MobiDB-lite"/>
    </source>
</evidence>
<evidence type="ECO:0000305" key="5"/>
<reference key="1">
    <citation type="journal article" date="2007" name="Proc. Natl. Acad. Sci. U.S.A.">
        <title>Independent sorting-out of thousands of duplicated gene pairs in two yeast species descended from a whole-genome duplication.</title>
        <authorList>
            <person name="Scannell D.R."/>
            <person name="Frank A.C."/>
            <person name="Conant G.C."/>
            <person name="Byrne K.P."/>
            <person name="Woolfit M."/>
            <person name="Wolfe K.H."/>
        </authorList>
    </citation>
    <scope>NUCLEOTIDE SEQUENCE [LARGE SCALE GENOMIC DNA]</scope>
    <source>
        <strain>ATCC 22028 / DSM 70294 / BCRC 21397 / CBS 2163 / NBRC 10782 / NRRL Y-8283 / UCD 57-17</strain>
    </source>
</reference>
<proteinExistence type="inferred from homology"/>
<name>DBP4_VANPO</name>
<sequence length="768" mass="87313">MAKKQRYNTTQRKELRKKEVDYIKELETKIDEYDASINKPVFFKDLPISNSTLKGLNDSAFLKLTDIQRDSIPMSLKGYDILGAAKTGSGKTLAFLIPVLEKLYRERWTEFDGLGALIISPTRELAMQIYEVLLKIGTSTSFSAGLVIGGKDVKFEMERISKINILIGTPGRILQHMDQAIGLNTSNLQMLVLDEADRCLDMGFKKTLDAIVSNLPPTRQTLLFSATQSQSLEDLARLSLTDYKTIGNPDILNPSNGKVLGPSTPETLQQSYINVELPDKLDMLYSFIKSHLKSKMIVFLSSSKQVHFVYETFRKMQPGISLMHLHGRQKQKARTETLDKFNRAQHVCLFATDVVARGIDFPAIDWVVQVDCPEDVDTYIHRVGRCARYGKQGKSMIMLTPQEEEGFLKRLASRKIEPSKLTIKQSKKKSIKPQLQSLLFKDPELKYLGQKAFISYIRSVFIQKDKEVFKFEELPTDEFANSLGLPGAPKIKMKGTKSVEQIKQMKNASRQLLSLAKTNEDGELVEEKSKQPVRTKYDKMFERKNQTVLSEHYLNITKAQAQEDEDDDFISIKRTDHALNEEELPQLSLPSSRRAQKRALSKKASLSTKGNATRVVFDDDGAAHPVYELQGEEDFIKAGAAEDQKLEYLQKEKDVMNEVDVEDKQVAKQKKQEKKRKRLEAIRREMEADMDNESSGEEKVPFLGTGNLSDDMQDPDSDDEEGSRLRKRSRFETNNNYNDNDSDDGVIQVEEPQTLEDLESLTARLIDN</sequence>